<gene>
    <name type="primary">Aco2</name>
</gene>
<feature type="transit peptide" description="Mitochondrion" evidence="1">
    <location>
        <begin position="1"/>
        <end position="27"/>
    </location>
</feature>
<feature type="chain" id="PRO_0000000542" description="Aconitate hydratase, mitochondrial">
    <location>
        <begin position="28"/>
        <end position="780"/>
    </location>
</feature>
<feature type="region of interest" description="Disordered" evidence="5">
    <location>
        <begin position="524"/>
        <end position="560"/>
    </location>
</feature>
<feature type="compositionally biased region" description="Basic and acidic residues" evidence="5">
    <location>
        <begin position="524"/>
        <end position="537"/>
    </location>
</feature>
<feature type="compositionally biased region" description="Polar residues" evidence="5">
    <location>
        <begin position="551"/>
        <end position="560"/>
    </location>
</feature>
<feature type="binding site" evidence="1">
    <location>
        <position position="99"/>
    </location>
    <ligand>
        <name>substrate</name>
    </ligand>
</feature>
<feature type="binding site" evidence="1">
    <location>
        <begin position="192"/>
        <end position="194"/>
    </location>
    <ligand>
        <name>substrate</name>
    </ligand>
</feature>
<feature type="binding site" evidence="1">
    <location>
        <position position="385"/>
    </location>
    <ligand>
        <name>[4Fe-4S] cluster</name>
        <dbReference type="ChEBI" id="CHEBI:49883"/>
    </ligand>
</feature>
<feature type="binding site" evidence="1">
    <location>
        <position position="448"/>
    </location>
    <ligand>
        <name>[4Fe-4S] cluster</name>
        <dbReference type="ChEBI" id="CHEBI:49883"/>
    </ligand>
</feature>
<feature type="binding site" evidence="1">
    <location>
        <position position="451"/>
    </location>
    <ligand>
        <name>[4Fe-4S] cluster</name>
        <dbReference type="ChEBI" id="CHEBI:49883"/>
    </ligand>
</feature>
<feature type="binding site" evidence="1">
    <location>
        <position position="474"/>
    </location>
    <ligand>
        <name>substrate</name>
    </ligand>
</feature>
<feature type="binding site" evidence="1">
    <location>
        <position position="479"/>
    </location>
    <ligand>
        <name>substrate</name>
    </ligand>
</feature>
<feature type="binding site" evidence="1">
    <location>
        <position position="607"/>
    </location>
    <ligand>
        <name>substrate</name>
    </ligand>
</feature>
<feature type="binding site" evidence="1">
    <location>
        <begin position="670"/>
        <end position="671"/>
    </location>
    <ligand>
        <name>substrate</name>
    </ligand>
</feature>
<feature type="modified residue" description="N6-succinyllysine" evidence="9">
    <location>
        <position position="31"/>
    </location>
</feature>
<feature type="modified residue" description="N6-acetyllysine; alternate" evidence="8 9">
    <location>
        <position position="50"/>
    </location>
</feature>
<feature type="modified residue" description="N6-succinyllysine; alternate" evidence="9">
    <location>
        <position position="50"/>
    </location>
</feature>
<feature type="modified residue" description="N6-acetyllysine; alternate" evidence="8">
    <location>
        <position position="138"/>
    </location>
</feature>
<feature type="modified residue" description="N6-succinyllysine; alternate" evidence="9">
    <location>
        <position position="138"/>
    </location>
</feature>
<feature type="modified residue" description="N6-acetyllysine; alternate" evidence="8 9">
    <location>
        <position position="144"/>
    </location>
</feature>
<feature type="modified residue" description="N6-succinyllysine; alternate" evidence="9">
    <location>
        <position position="144"/>
    </location>
</feature>
<feature type="modified residue" description="N6-acetyllysine; alternate" evidence="8">
    <location>
        <position position="233"/>
    </location>
</feature>
<feature type="modified residue" description="N6-succinyllysine; alternate" evidence="9">
    <location>
        <position position="233"/>
    </location>
</feature>
<feature type="modified residue" description="N6-succinyllysine" evidence="9">
    <location>
        <position position="411"/>
    </location>
</feature>
<feature type="modified residue" description="N6-acetyllysine; alternate" evidence="8">
    <location>
        <position position="517"/>
    </location>
</feature>
<feature type="modified residue" description="N6-succinyllysine; alternate" evidence="9">
    <location>
        <position position="517"/>
    </location>
</feature>
<feature type="modified residue" description="N6-acetyllysine; alternate" evidence="8">
    <location>
        <position position="523"/>
    </location>
</feature>
<feature type="modified residue" description="N6-succinyllysine; alternate" evidence="9">
    <location>
        <position position="523"/>
    </location>
</feature>
<feature type="modified residue" description="N6-succinyllysine" evidence="9">
    <location>
        <position position="549"/>
    </location>
</feature>
<feature type="modified residue" description="Phosphoserine" evidence="3">
    <location>
        <position position="559"/>
    </location>
</feature>
<feature type="modified residue" description="N6-acetyllysine; alternate" evidence="3">
    <location>
        <position position="573"/>
    </location>
</feature>
<feature type="modified residue" description="N6-succinyllysine; alternate" evidence="9">
    <location>
        <position position="573"/>
    </location>
</feature>
<feature type="modified residue" description="N6-succinyllysine" evidence="9">
    <location>
        <position position="577"/>
    </location>
</feature>
<feature type="modified residue" description="N6-succinyllysine" evidence="9">
    <location>
        <position position="591"/>
    </location>
</feature>
<feature type="modified residue" description="N6-acetyllysine; alternate" evidence="8">
    <location>
        <position position="605"/>
    </location>
</feature>
<feature type="modified residue" description="N6-succinyllysine; alternate" evidence="9">
    <location>
        <position position="605"/>
    </location>
</feature>
<feature type="modified residue" description="N6-succinyllysine" evidence="9">
    <location>
        <position position="628"/>
    </location>
</feature>
<feature type="modified residue" description="Phosphoserine" evidence="7">
    <location>
        <position position="670"/>
    </location>
</feature>
<feature type="modified residue" description="N6-succinyllysine" evidence="9">
    <location>
        <position position="689"/>
    </location>
</feature>
<feature type="modified residue" description="N6-acetyllysine; alternate" evidence="8">
    <location>
        <position position="723"/>
    </location>
</feature>
<feature type="modified residue" description="N6-succinyllysine; alternate" evidence="9">
    <location>
        <position position="723"/>
    </location>
</feature>
<feature type="modified residue" description="N6-acetyllysine; alternate" evidence="8">
    <location>
        <position position="730"/>
    </location>
</feature>
<feature type="modified residue" description="N6-succinyllysine; alternate" evidence="9">
    <location>
        <position position="730"/>
    </location>
</feature>
<feature type="modified residue" description="N6-acetyllysine" evidence="8">
    <location>
        <position position="736"/>
    </location>
</feature>
<feature type="modified residue" description="N6-acetyllysine" evidence="8">
    <location>
        <position position="739"/>
    </location>
</feature>
<feature type="modified residue" description="N6-acetyllysine" evidence="8">
    <location>
        <position position="743"/>
    </location>
</feature>
<feature type="sequence conflict" description="In Ref. 1; BAE25770." evidence="6" ref="1">
    <original>LV</original>
    <variation>P</variation>
    <location>
        <begin position="7"/>
        <end position="8"/>
    </location>
</feature>
<feature type="sequence conflict" description="In Ref. 2; AAH94462." evidence="6" ref="2">
    <original>L</original>
    <variation>F</variation>
    <location>
        <position position="618"/>
    </location>
</feature>
<feature type="sequence conflict" description="In Ref. 1; BAE29252." evidence="6" ref="1">
    <original>F</original>
    <variation>L</variation>
    <location>
        <position position="758"/>
    </location>
</feature>
<name>ACON_MOUSE</name>
<evidence type="ECO:0000250" key="1"/>
<evidence type="ECO:0000250" key="2">
    <source>
        <dbReference type="UniProtKB" id="P16276"/>
    </source>
</evidence>
<evidence type="ECO:0000250" key="3">
    <source>
        <dbReference type="UniProtKB" id="Q99798"/>
    </source>
</evidence>
<evidence type="ECO:0000250" key="4">
    <source>
        <dbReference type="UniProtKB" id="Q9ER34"/>
    </source>
</evidence>
<evidence type="ECO:0000256" key="5">
    <source>
        <dbReference type="SAM" id="MobiDB-lite"/>
    </source>
</evidence>
<evidence type="ECO:0000305" key="6"/>
<evidence type="ECO:0007744" key="7">
    <source>
    </source>
</evidence>
<evidence type="ECO:0007744" key="8">
    <source>
    </source>
</evidence>
<evidence type="ECO:0007744" key="9">
    <source>
    </source>
</evidence>
<reference key="1">
    <citation type="journal article" date="2005" name="Science">
        <title>The transcriptional landscape of the mammalian genome.</title>
        <authorList>
            <person name="Carninci P."/>
            <person name="Kasukawa T."/>
            <person name="Katayama S."/>
            <person name="Gough J."/>
            <person name="Frith M.C."/>
            <person name="Maeda N."/>
            <person name="Oyama R."/>
            <person name="Ravasi T."/>
            <person name="Lenhard B."/>
            <person name="Wells C."/>
            <person name="Kodzius R."/>
            <person name="Shimokawa K."/>
            <person name="Bajic V.B."/>
            <person name="Brenner S.E."/>
            <person name="Batalov S."/>
            <person name="Forrest A.R."/>
            <person name="Zavolan M."/>
            <person name="Davis M.J."/>
            <person name="Wilming L.G."/>
            <person name="Aidinis V."/>
            <person name="Allen J.E."/>
            <person name="Ambesi-Impiombato A."/>
            <person name="Apweiler R."/>
            <person name="Aturaliya R.N."/>
            <person name="Bailey T.L."/>
            <person name="Bansal M."/>
            <person name="Baxter L."/>
            <person name="Beisel K.W."/>
            <person name="Bersano T."/>
            <person name="Bono H."/>
            <person name="Chalk A.M."/>
            <person name="Chiu K.P."/>
            <person name="Choudhary V."/>
            <person name="Christoffels A."/>
            <person name="Clutterbuck D.R."/>
            <person name="Crowe M.L."/>
            <person name="Dalla E."/>
            <person name="Dalrymple B.P."/>
            <person name="de Bono B."/>
            <person name="Della Gatta G."/>
            <person name="di Bernardo D."/>
            <person name="Down T."/>
            <person name="Engstrom P."/>
            <person name="Fagiolini M."/>
            <person name="Faulkner G."/>
            <person name="Fletcher C.F."/>
            <person name="Fukushima T."/>
            <person name="Furuno M."/>
            <person name="Futaki S."/>
            <person name="Gariboldi M."/>
            <person name="Georgii-Hemming P."/>
            <person name="Gingeras T.R."/>
            <person name="Gojobori T."/>
            <person name="Green R.E."/>
            <person name="Gustincich S."/>
            <person name="Harbers M."/>
            <person name="Hayashi Y."/>
            <person name="Hensch T.K."/>
            <person name="Hirokawa N."/>
            <person name="Hill D."/>
            <person name="Huminiecki L."/>
            <person name="Iacono M."/>
            <person name="Ikeo K."/>
            <person name="Iwama A."/>
            <person name="Ishikawa T."/>
            <person name="Jakt M."/>
            <person name="Kanapin A."/>
            <person name="Katoh M."/>
            <person name="Kawasawa Y."/>
            <person name="Kelso J."/>
            <person name="Kitamura H."/>
            <person name="Kitano H."/>
            <person name="Kollias G."/>
            <person name="Krishnan S.P."/>
            <person name="Kruger A."/>
            <person name="Kummerfeld S.K."/>
            <person name="Kurochkin I.V."/>
            <person name="Lareau L.F."/>
            <person name="Lazarevic D."/>
            <person name="Lipovich L."/>
            <person name="Liu J."/>
            <person name="Liuni S."/>
            <person name="McWilliam S."/>
            <person name="Madan Babu M."/>
            <person name="Madera M."/>
            <person name="Marchionni L."/>
            <person name="Matsuda H."/>
            <person name="Matsuzawa S."/>
            <person name="Miki H."/>
            <person name="Mignone F."/>
            <person name="Miyake S."/>
            <person name="Morris K."/>
            <person name="Mottagui-Tabar S."/>
            <person name="Mulder N."/>
            <person name="Nakano N."/>
            <person name="Nakauchi H."/>
            <person name="Ng P."/>
            <person name="Nilsson R."/>
            <person name="Nishiguchi S."/>
            <person name="Nishikawa S."/>
            <person name="Nori F."/>
            <person name="Ohara O."/>
            <person name="Okazaki Y."/>
            <person name="Orlando V."/>
            <person name="Pang K.C."/>
            <person name="Pavan W.J."/>
            <person name="Pavesi G."/>
            <person name="Pesole G."/>
            <person name="Petrovsky N."/>
            <person name="Piazza S."/>
            <person name="Reed J."/>
            <person name="Reid J.F."/>
            <person name="Ring B.Z."/>
            <person name="Ringwald M."/>
            <person name="Rost B."/>
            <person name="Ruan Y."/>
            <person name="Salzberg S.L."/>
            <person name="Sandelin A."/>
            <person name="Schneider C."/>
            <person name="Schoenbach C."/>
            <person name="Sekiguchi K."/>
            <person name="Semple C.A."/>
            <person name="Seno S."/>
            <person name="Sessa L."/>
            <person name="Sheng Y."/>
            <person name="Shibata Y."/>
            <person name="Shimada H."/>
            <person name="Shimada K."/>
            <person name="Silva D."/>
            <person name="Sinclair B."/>
            <person name="Sperling S."/>
            <person name="Stupka E."/>
            <person name="Sugiura K."/>
            <person name="Sultana R."/>
            <person name="Takenaka Y."/>
            <person name="Taki K."/>
            <person name="Tammoja K."/>
            <person name="Tan S.L."/>
            <person name="Tang S."/>
            <person name="Taylor M.S."/>
            <person name="Tegner J."/>
            <person name="Teichmann S.A."/>
            <person name="Ueda H.R."/>
            <person name="van Nimwegen E."/>
            <person name="Verardo R."/>
            <person name="Wei C.L."/>
            <person name="Yagi K."/>
            <person name="Yamanishi H."/>
            <person name="Zabarovsky E."/>
            <person name="Zhu S."/>
            <person name="Zimmer A."/>
            <person name="Hide W."/>
            <person name="Bult C."/>
            <person name="Grimmond S.M."/>
            <person name="Teasdale R.D."/>
            <person name="Liu E.T."/>
            <person name="Brusic V."/>
            <person name="Quackenbush J."/>
            <person name="Wahlestedt C."/>
            <person name="Mattick J.S."/>
            <person name="Hume D.A."/>
            <person name="Kai C."/>
            <person name="Sasaki D."/>
            <person name="Tomaru Y."/>
            <person name="Fukuda S."/>
            <person name="Kanamori-Katayama M."/>
            <person name="Suzuki M."/>
            <person name="Aoki J."/>
            <person name="Arakawa T."/>
            <person name="Iida J."/>
            <person name="Imamura K."/>
            <person name="Itoh M."/>
            <person name="Kato T."/>
            <person name="Kawaji H."/>
            <person name="Kawagashira N."/>
            <person name="Kawashima T."/>
            <person name="Kojima M."/>
            <person name="Kondo S."/>
            <person name="Konno H."/>
            <person name="Nakano K."/>
            <person name="Ninomiya N."/>
            <person name="Nishio T."/>
            <person name="Okada M."/>
            <person name="Plessy C."/>
            <person name="Shibata K."/>
            <person name="Shiraki T."/>
            <person name="Suzuki S."/>
            <person name="Tagami M."/>
            <person name="Waki K."/>
            <person name="Watahiki A."/>
            <person name="Okamura-Oho Y."/>
            <person name="Suzuki H."/>
            <person name="Kawai J."/>
            <person name="Hayashizaki Y."/>
        </authorList>
    </citation>
    <scope>NUCLEOTIDE SEQUENCE [LARGE SCALE MRNA]</scope>
    <source>
        <strain>C57BL/6J</strain>
        <tissue>Bone marrow</tissue>
        <tissue>Kidney</tissue>
    </source>
</reference>
<reference key="2">
    <citation type="journal article" date="2004" name="Genome Res.">
        <title>The status, quality, and expansion of the NIH full-length cDNA project: the Mammalian Gene Collection (MGC).</title>
        <authorList>
            <consortium name="The MGC Project Team"/>
        </authorList>
    </citation>
    <scope>NUCLEOTIDE SEQUENCE [LARGE SCALE MRNA]</scope>
    <source>
        <strain>FVB/N</strain>
        <tissue>Kidney</tissue>
        <tissue>Mammary tumor</tissue>
    </source>
</reference>
<reference key="3">
    <citation type="submission" date="2009-01" db="UniProtKB">
        <authorList>
            <person name="Lubec G."/>
            <person name="Klug S."/>
            <person name="Kang S.U."/>
            <person name="Sunyer B."/>
            <person name="Chen W.-Q."/>
        </authorList>
    </citation>
    <scope>PROTEIN SEQUENCE OF 32-56; 59-84; 96-138; 143-160; 234-245; 251-258; 313-323; 371-395; 402-409; 412-424; 430-457; 466-474; 480-517; 522-587; 592-605; 608-628; 634-648; 657-671; 694-739 AND 744-767</scope>
    <scope>IDENTIFICATION BY MASS SPECTROMETRY</scope>
    <source>
        <strain>C57BL/6J</strain>
        <strain>OF1</strain>
        <tissue>Brain</tissue>
        <tissue>Hippocampus</tissue>
    </source>
</reference>
<reference key="4">
    <citation type="journal article" date="2010" name="Cell">
        <title>A tissue-specific atlas of mouse protein phosphorylation and expression.</title>
        <authorList>
            <person name="Huttlin E.L."/>
            <person name="Jedrychowski M.P."/>
            <person name="Elias J.E."/>
            <person name="Goswami T."/>
            <person name="Rad R."/>
            <person name="Beausoleil S.A."/>
            <person name="Villen J."/>
            <person name="Haas W."/>
            <person name="Sowa M.E."/>
            <person name="Gygi S.P."/>
        </authorList>
    </citation>
    <scope>PHOSPHORYLATION [LARGE SCALE ANALYSIS] AT SER-670</scope>
    <scope>IDENTIFICATION BY MASS SPECTROMETRY [LARGE SCALE ANALYSIS]</scope>
    <source>
        <tissue>Brain</tissue>
        <tissue>Brown adipose tissue</tissue>
        <tissue>Heart</tissue>
        <tissue>Kidney</tissue>
        <tissue>Liver</tissue>
        <tissue>Lung</tissue>
        <tissue>Pancreas</tissue>
        <tissue>Spleen</tissue>
        <tissue>Testis</tissue>
    </source>
</reference>
<reference key="5">
    <citation type="journal article" date="2013" name="Mol. Cell">
        <title>SIRT5-mediated lysine desuccinylation impacts diverse metabolic pathways.</title>
        <authorList>
            <person name="Park J."/>
            <person name="Chen Y."/>
            <person name="Tishkoff D.X."/>
            <person name="Peng C."/>
            <person name="Tan M."/>
            <person name="Dai L."/>
            <person name="Xie Z."/>
            <person name="Zhang Y."/>
            <person name="Zwaans B.M."/>
            <person name="Skinner M.E."/>
            <person name="Lombard D.B."/>
            <person name="Zhao Y."/>
        </authorList>
    </citation>
    <scope>ACETYLATION [LARGE SCALE ANALYSIS] AT LYS-50 AND LYS-144</scope>
    <scope>SUCCINYLATION [LARGE SCALE ANALYSIS] AT LYS-31; LYS-50; LYS-138; LYS-144; LYS-233; LYS-411; LYS-517; LYS-523; LYS-549; LYS-573; LYS-577; LYS-591; LYS-605; LYS-628; LYS-689; LYS-723 AND LYS-730</scope>
    <scope>IDENTIFICATION BY MASS SPECTROMETRY [LARGE SCALE ANALYSIS]</scope>
    <source>
        <tissue>Embryonic fibroblast</tissue>
        <tissue>Liver</tissue>
    </source>
</reference>
<reference key="6">
    <citation type="journal article" date="2013" name="Proc. Natl. Acad. Sci. U.S.A.">
        <title>Label-free quantitative proteomics of the lysine acetylome in mitochondria identifies substrates of SIRT3 in metabolic pathways.</title>
        <authorList>
            <person name="Rardin M.J."/>
            <person name="Newman J.C."/>
            <person name="Held J.M."/>
            <person name="Cusack M.P."/>
            <person name="Sorensen D.J."/>
            <person name="Li B."/>
            <person name="Schilling B."/>
            <person name="Mooney S.D."/>
            <person name="Kahn C.R."/>
            <person name="Verdin E."/>
            <person name="Gibson B.W."/>
        </authorList>
    </citation>
    <scope>ACETYLATION [LARGE SCALE ANALYSIS] AT LYS-50; LYS-138; LYS-144; LYS-233; LYS-517; LYS-523; LYS-605; LYS-723; LYS-730; LYS-736; LYS-739 AND LYS-743</scope>
    <scope>IDENTIFICATION BY MASS SPECTROMETRY [LARGE SCALE ANALYSIS]</scope>
    <source>
        <tissue>Liver</tissue>
    </source>
</reference>
<protein>
    <recommendedName>
        <fullName>Aconitate hydratase, mitochondrial</fullName>
        <shortName>Aconitase</shortName>
        <ecNumber evidence="2">4.2.1.3</ecNumber>
    </recommendedName>
    <alternativeName>
        <fullName>Citrate hydro-lyase</fullName>
    </alternativeName>
</protein>
<organism>
    <name type="scientific">Mus musculus</name>
    <name type="common">Mouse</name>
    <dbReference type="NCBI Taxonomy" id="10090"/>
    <lineage>
        <taxon>Eukaryota</taxon>
        <taxon>Metazoa</taxon>
        <taxon>Chordata</taxon>
        <taxon>Craniata</taxon>
        <taxon>Vertebrata</taxon>
        <taxon>Euteleostomi</taxon>
        <taxon>Mammalia</taxon>
        <taxon>Eutheria</taxon>
        <taxon>Euarchontoglires</taxon>
        <taxon>Glires</taxon>
        <taxon>Rodentia</taxon>
        <taxon>Myomorpha</taxon>
        <taxon>Muroidea</taxon>
        <taxon>Muridae</taxon>
        <taxon>Murinae</taxon>
        <taxon>Mus</taxon>
        <taxon>Mus</taxon>
    </lineage>
</organism>
<comment type="function">
    <text evidence="2">Catalyzes the isomerization of citrate to isocitrate via cis-aconitate.</text>
</comment>
<comment type="catalytic activity">
    <reaction evidence="2">
        <text>citrate = D-threo-isocitrate</text>
        <dbReference type="Rhea" id="RHEA:10336"/>
        <dbReference type="ChEBI" id="CHEBI:15562"/>
        <dbReference type="ChEBI" id="CHEBI:16947"/>
        <dbReference type="EC" id="4.2.1.3"/>
    </reaction>
</comment>
<comment type="cofactor">
    <cofactor evidence="2">
        <name>[4Fe-4S] cluster</name>
        <dbReference type="ChEBI" id="CHEBI:49883"/>
    </cofactor>
    <text evidence="2">Binds 1 [4Fe-4S] cluster per subunit. Binding of a [3Fe-4S] cluster leads to an inactive enzyme.</text>
</comment>
<comment type="pathway">
    <text>Carbohydrate metabolism; tricarboxylic acid cycle; isocitrate from oxaloacetate: step 2/2.</text>
</comment>
<comment type="subunit">
    <text evidence="2">Monomer.</text>
</comment>
<comment type="subcellular location">
    <subcellularLocation>
        <location evidence="2">Mitochondrion</location>
    </subcellularLocation>
</comment>
<comment type="PTM">
    <text evidence="4">Forms covalent cross-links mediated by transglutaminase TGM2, between a glutamine and the epsilon-amino group of a lysine residue, forming homopolymers and heteropolymers.</text>
</comment>
<comment type="similarity">
    <text evidence="6">Belongs to the aconitase/IPM isomerase family.</text>
</comment>
<proteinExistence type="evidence at protein level"/>
<keyword id="KW-0004">4Fe-4S</keyword>
<keyword id="KW-0007">Acetylation</keyword>
<keyword id="KW-0903">Direct protein sequencing</keyword>
<keyword id="KW-0408">Iron</keyword>
<keyword id="KW-0411">Iron-sulfur</keyword>
<keyword id="KW-0456">Lyase</keyword>
<keyword id="KW-0479">Metal-binding</keyword>
<keyword id="KW-0496">Mitochondrion</keyword>
<keyword id="KW-0597">Phosphoprotein</keyword>
<keyword id="KW-1185">Reference proteome</keyword>
<keyword id="KW-0809">Transit peptide</keyword>
<keyword id="KW-0816">Tricarboxylic acid cycle</keyword>
<sequence length="780" mass="85464">MAPYSLLVTRLQKALGVRQYHVASVLCQRAKVAMSHFEPSEYIRYDLLEKNINIVRKRLNRPLTLSEKIVYGHLDDPANQEIERGKTYLRLRPDRVAMQDATAQMAMLQFISSGLPKVAVPSTIHCDHLIEAQVGGEKDLRRAKDINQEVYNFLATAGAKYGVGFWRPGSGIIHQIILENYAYPGVLLIGTDSHTPNGGGLGGICIGVGGADAVDVMAGIPWELKCPKVIGVKLTGSLSGWTSPKDVILKVAGILTVKGGTGAIVEYHGPGVDSISCTGMATICNMGAEIGATTSVFPYNHRMKKYLSKTGRTDIANLAEEFKDHLVPDPGCQYDQVIEINLNELKPHINGPFTPDLAHPVADVGTVAEKEGWPLDIRVGLIGSCTNSSYEDMGRSAAVAKQALAHGLKCKSQFTITPGSEQIRATIERDGYAQILRDVGGIVLANACGPCIGQWDRKDIKKGEKNTIVTSYNRNFTGRNDANPETHAFVTSPEIVTALAIAGTLKFNPETDFLTGKDGKKFKLEAPDADELPRSDFDPGQDTYQHPPKDSSGQRVDVSPTSQRLQLLEPFDKWDGKDLEDLQILIKVKGKCTTDHISAAGPWLKFRGHLDNISNNLLIGAINIENGKANSVRNAVTQEFGPVPDTARYYKKHGIRWVVIGDENYGEGSSREHAALEPRHLGGRAIITKSFARIHETNLKKQGLLPLTFADPSDYNKIHPVDKLTIQGLKDFAPGKPLKCVIKHPNGTQETILLNHTFNETQIEWFRAGSALNRMKELQQ</sequence>
<dbReference type="EC" id="4.2.1.3" evidence="2"/>
<dbReference type="EMBL" id="AK143917">
    <property type="protein sequence ID" value="BAE25602.1"/>
    <property type="molecule type" value="mRNA"/>
</dbReference>
<dbReference type="EMBL" id="AK144207">
    <property type="protein sequence ID" value="BAE25770.1"/>
    <property type="molecule type" value="mRNA"/>
</dbReference>
<dbReference type="EMBL" id="AK145511">
    <property type="protein sequence ID" value="BAE26479.1"/>
    <property type="molecule type" value="mRNA"/>
</dbReference>
<dbReference type="EMBL" id="AK150027">
    <property type="protein sequence ID" value="BAE29252.1"/>
    <property type="molecule type" value="mRNA"/>
</dbReference>
<dbReference type="EMBL" id="AK165411">
    <property type="protein sequence ID" value="BAE38169.1"/>
    <property type="molecule type" value="mRNA"/>
</dbReference>
<dbReference type="EMBL" id="BC004645">
    <property type="protein sequence ID" value="AAH04645.1"/>
    <property type="molecule type" value="mRNA"/>
</dbReference>
<dbReference type="EMBL" id="BC094462">
    <property type="protein sequence ID" value="AAH94462.1"/>
    <property type="molecule type" value="mRNA"/>
</dbReference>
<dbReference type="CCDS" id="CCDS27675.1"/>
<dbReference type="RefSeq" id="NP_542364.1">
    <property type="nucleotide sequence ID" value="NM_080633.2"/>
</dbReference>
<dbReference type="SMR" id="Q99KI0"/>
<dbReference type="BioGRID" id="197925">
    <property type="interactions" value="101"/>
</dbReference>
<dbReference type="FunCoup" id="Q99KI0">
    <property type="interactions" value="1851"/>
</dbReference>
<dbReference type="IntAct" id="Q99KI0">
    <property type="interactions" value="8"/>
</dbReference>
<dbReference type="MINT" id="Q99KI0"/>
<dbReference type="STRING" id="10090.ENSMUSP00000023116"/>
<dbReference type="CarbonylDB" id="Q99KI0"/>
<dbReference type="GlyGen" id="Q99KI0">
    <property type="glycosylation" value="2 sites, 1 O-linked glycan (1 site)"/>
</dbReference>
<dbReference type="iPTMnet" id="Q99KI0"/>
<dbReference type="MetOSite" id="Q99KI0"/>
<dbReference type="PhosphoSitePlus" id="Q99KI0"/>
<dbReference type="SwissPalm" id="Q99KI0"/>
<dbReference type="REPRODUCTION-2DPAGE" id="Q99KI0"/>
<dbReference type="jPOST" id="Q99KI0"/>
<dbReference type="PaxDb" id="10090-ENSMUSP00000023116"/>
<dbReference type="PeptideAtlas" id="Q99KI0"/>
<dbReference type="ProteomicsDB" id="285596"/>
<dbReference type="Pumba" id="Q99KI0"/>
<dbReference type="Antibodypedia" id="240">
    <property type="antibodies" value="526 antibodies from 39 providers"/>
</dbReference>
<dbReference type="DNASU" id="11429"/>
<dbReference type="Ensembl" id="ENSMUST00000023116.7">
    <property type="protein sequence ID" value="ENSMUSP00000023116.7"/>
    <property type="gene ID" value="ENSMUSG00000022477.14"/>
</dbReference>
<dbReference type="GeneID" id="11429"/>
<dbReference type="KEGG" id="mmu:11429"/>
<dbReference type="UCSC" id="uc007wxp.1">
    <property type="organism name" value="mouse"/>
</dbReference>
<dbReference type="AGR" id="MGI:87880"/>
<dbReference type="CTD" id="50"/>
<dbReference type="MGI" id="MGI:87880">
    <property type="gene designation" value="Aco2"/>
</dbReference>
<dbReference type="VEuPathDB" id="HostDB:ENSMUSG00000022477"/>
<dbReference type="eggNOG" id="KOG0453">
    <property type="taxonomic scope" value="Eukaryota"/>
</dbReference>
<dbReference type="GeneTree" id="ENSGT00940000154892"/>
<dbReference type="HOGENOM" id="CLU_006714_2_2_1"/>
<dbReference type="InParanoid" id="Q99KI0"/>
<dbReference type="OMA" id="KKQGMLG"/>
<dbReference type="OrthoDB" id="2224430at2759"/>
<dbReference type="PhylomeDB" id="Q99KI0"/>
<dbReference type="TreeFam" id="TF300627"/>
<dbReference type="BRENDA" id="4.2.1.3">
    <property type="organism ID" value="3474"/>
</dbReference>
<dbReference type="Reactome" id="R-MMU-71403">
    <property type="pathway name" value="Citric acid cycle (TCA cycle)"/>
</dbReference>
<dbReference type="Reactome" id="R-MMU-9837999">
    <property type="pathway name" value="Mitochondrial protein degradation"/>
</dbReference>
<dbReference type="Reactome" id="R-MMU-9854311">
    <property type="pathway name" value="Maturation of TCA enzymes and regulation of TCA cycle"/>
</dbReference>
<dbReference type="UniPathway" id="UPA00223">
    <property type="reaction ID" value="UER00718"/>
</dbReference>
<dbReference type="BioGRID-ORCS" id="11429">
    <property type="hits" value="16 hits in 78 CRISPR screens"/>
</dbReference>
<dbReference type="ChiTaRS" id="Aco2">
    <property type="organism name" value="mouse"/>
</dbReference>
<dbReference type="PRO" id="PR:Q99KI0"/>
<dbReference type="Proteomes" id="UP000000589">
    <property type="component" value="Chromosome 15"/>
</dbReference>
<dbReference type="RNAct" id="Q99KI0">
    <property type="molecule type" value="protein"/>
</dbReference>
<dbReference type="Bgee" id="ENSMUSG00000022477">
    <property type="expression patterns" value="Expressed in cardiac muscle of left ventricle and 275 other cell types or tissues"/>
</dbReference>
<dbReference type="ExpressionAtlas" id="Q99KI0">
    <property type="expression patterns" value="baseline and differential"/>
</dbReference>
<dbReference type="GO" id="GO:0005739">
    <property type="term" value="C:mitochondrion"/>
    <property type="evidence" value="ECO:0000314"/>
    <property type="project" value="MGI"/>
</dbReference>
<dbReference type="GO" id="GO:0043209">
    <property type="term" value="C:myelin sheath"/>
    <property type="evidence" value="ECO:0007005"/>
    <property type="project" value="UniProtKB"/>
</dbReference>
<dbReference type="GO" id="GO:0051539">
    <property type="term" value="F:4 iron, 4 sulfur cluster binding"/>
    <property type="evidence" value="ECO:0007669"/>
    <property type="project" value="UniProtKB-KW"/>
</dbReference>
<dbReference type="GO" id="GO:0003994">
    <property type="term" value="F:aconitate hydratase activity"/>
    <property type="evidence" value="ECO:0000314"/>
    <property type="project" value="MGI"/>
</dbReference>
<dbReference type="GO" id="GO:0005506">
    <property type="term" value="F:iron ion binding"/>
    <property type="evidence" value="ECO:0000266"/>
    <property type="project" value="MGI"/>
</dbReference>
<dbReference type="GO" id="GO:0006101">
    <property type="term" value="P:citrate metabolic process"/>
    <property type="evidence" value="ECO:0000266"/>
    <property type="project" value="MGI"/>
</dbReference>
<dbReference type="GO" id="GO:0006099">
    <property type="term" value="P:tricarboxylic acid cycle"/>
    <property type="evidence" value="ECO:0000266"/>
    <property type="project" value="MGI"/>
</dbReference>
<dbReference type="CDD" id="cd01578">
    <property type="entry name" value="AcnA_Mitochon_Swivel"/>
    <property type="match status" value="1"/>
</dbReference>
<dbReference type="CDD" id="cd01584">
    <property type="entry name" value="AcnA_Mitochondrial"/>
    <property type="match status" value="1"/>
</dbReference>
<dbReference type="FunFam" id="3.20.19.10:FF:000002">
    <property type="entry name" value="Aconitate hydratase, mitochondrial"/>
    <property type="match status" value="1"/>
</dbReference>
<dbReference type="FunFam" id="3.30.499.10:FF:000003">
    <property type="entry name" value="Aconitate hydratase, mitochondrial"/>
    <property type="match status" value="1"/>
</dbReference>
<dbReference type="FunFam" id="3.30.499.10:FF:000004">
    <property type="entry name" value="Aconitate hydratase, mitochondrial"/>
    <property type="match status" value="1"/>
</dbReference>
<dbReference type="FunFam" id="3.40.1060.10:FF:000001">
    <property type="entry name" value="Aconitate hydratase, mitochondrial"/>
    <property type="match status" value="1"/>
</dbReference>
<dbReference type="Gene3D" id="3.40.1060.10">
    <property type="entry name" value="Aconitase, Domain 2"/>
    <property type="match status" value="1"/>
</dbReference>
<dbReference type="Gene3D" id="3.30.499.10">
    <property type="entry name" value="Aconitase, domain 3"/>
    <property type="match status" value="2"/>
</dbReference>
<dbReference type="Gene3D" id="3.20.19.10">
    <property type="entry name" value="Aconitase, domain 4"/>
    <property type="match status" value="1"/>
</dbReference>
<dbReference type="InterPro" id="IPR015931">
    <property type="entry name" value="Acnase/IPM_dHydase_lsu_aba_1/3"/>
</dbReference>
<dbReference type="InterPro" id="IPR001030">
    <property type="entry name" value="Acoase/IPM_deHydtase_lsu_aba"/>
</dbReference>
<dbReference type="InterPro" id="IPR015928">
    <property type="entry name" value="Aconitase/3IPM_dehydase_swvl"/>
</dbReference>
<dbReference type="InterPro" id="IPR050926">
    <property type="entry name" value="Aconitase/IPM_isomerase"/>
</dbReference>
<dbReference type="InterPro" id="IPR018136">
    <property type="entry name" value="Aconitase_4Fe-4S_BS"/>
</dbReference>
<dbReference type="InterPro" id="IPR036008">
    <property type="entry name" value="Aconitase_4Fe-4S_dom"/>
</dbReference>
<dbReference type="InterPro" id="IPR015932">
    <property type="entry name" value="Aconitase_dom2"/>
</dbReference>
<dbReference type="InterPro" id="IPR006248">
    <property type="entry name" value="Aconitase_mito-like"/>
</dbReference>
<dbReference type="InterPro" id="IPR000573">
    <property type="entry name" value="AconitaseA/IPMdHydase_ssu_swvl"/>
</dbReference>
<dbReference type="NCBIfam" id="TIGR01340">
    <property type="entry name" value="aconitase_mito"/>
    <property type="match status" value="1"/>
</dbReference>
<dbReference type="NCBIfam" id="NF005558">
    <property type="entry name" value="PRK07229.1"/>
    <property type="match status" value="1"/>
</dbReference>
<dbReference type="PANTHER" id="PTHR43160">
    <property type="entry name" value="ACONITATE HYDRATASE B"/>
    <property type="match status" value="1"/>
</dbReference>
<dbReference type="PANTHER" id="PTHR43160:SF3">
    <property type="entry name" value="ACONITATE HYDRATASE, MITOCHONDRIAL"/>
    <property type="match status" value="1"/>
</dbReference>
<dbReference type="Pfam" id="PF00330">
    <property type="entry name" value="Aconitase"/>
    <property type="match status" value="1"/>
</dbReference>
<dbReference type="Pfam" id="PF00694">
    <property type="entry name" value="Aconitase_C"/>
    <property type="match status" value="1"/>
</dbReference>
<dbReference type="PRINTS" id="PR00415">
    <property type="entry name" value="ACONITASE"/>
</dbReference>
<dbReference type="SUPFAM" id="SSF53732">
    <property type="entry name" value="Aconitase iron-sulfur domain"/>
    <property type="match status" value="1"/>
</dbReference>
<dbReference type="SUPFAM" id="SSF52016">
    <property type="entry name" value="LeuD/IlvD-like"/>
    <property type="match status" value="1"/>
</dbReference>
<dbReference type="PROSITE" id="PS00450">
    <property type="entry name" value="ACONITASE_1"/>
    <property type="match status" value="1"/>
</dbReference>
<dbReference type="PROSITE" id="PS01244">
    <property type="entry name" value="ACONITASE_2"/>
    <property type="match status" value="1"/>
</dbReference>
<accession>Q99KI0</accession>
<accession>Q3UDK9</accession>
<accession>Q3ULG9</accession>
<accession>Q3UNH7</accession>
<accession>Q505P4</accession>